<feature type="chain" id="PRO_1000020750" description="Glycerol kinase">
    <location>
        <begin position="1"/>
        <end position="496"/>
    </location>
</feature>
<feature type="binding site" evidence="1">
    <location>
        <position position="14"/>
    </location>
    <ligand>
        <name>ADP</name>
        <dbReference type="ChEBI" id="CHEBI:456216"/>
    </ligand>
</feature>
<feature type="binding site" evidence="1">
    <location>
        <position position="14"/>
    </location>
    <ligand>
        <name>ATP</name>
        <dbReference type="ChEBI" id="CHEBI:30616"/>
    </ligand>
</feature>
<feature type="binding site" evidence="1">
    <location>
        <position position="14"/>
    </location>
    <ligand>
        <name>sn-glycerol 3-phosphate</name>
        <dbReference type="ChEBI" id="CHEBI:57597"/>
    </ligand>
</feature>
<feature type="binding site" evidence="1">
    <location>
        <position position="15"/>
    </location>
    <ligand>
        <name>ATP</name>
        <dbReference type="ChEBI" id="CHEBI:30616"/>
    </ligand>
</feature>
<feature type="binding site" evidence="1">
    <location>
        <position position="84"/>
    </location>
    <ligand>
        <name>glycerol</name>
        <dbReference type="ChEBI" id="CHEBI:17754"/>
    </ligand>
</feature>
<feature type="binding site" evidence="1">
    <location>
        <position position="84"/>
    </location>
    <ligand>
        <name>sn-glycerol 3-phosphate</name>
        <dbReference type="ChEBI" id="CHEBI:57597"/>
    </ligand>
</feature>
<feature type="binding site" evidence="1">
    <location>
        <position position="85"/>
    </location>
    <ligand>
        <name>glycerol</name>
        <dbReference type="ChEBI" id="CHEBI:17754"/>
    </ligand>
</feature>
<feature type="binding site" evidence="1">
    <location>
        <position position="85"/>
    </location>
    <ligand>
        <name>sn-glycerol 3-phosphate</name>
        <dbReference type="ChEBI" id="CHEBI:57597"/>
    </ligand>
</feature>
<feature type="binding site" evidence="1">
    <location>
        <position position="136"/>
    </location>
    <ligand>
        <name>glycerol</name>
        <dbReference type="ChEBI" id="CHEBI:17754"/>
    </ligand>
</feature>
<feature type="binding site" evidence="1">
    <location>
        <position position="136"/>
    </location>
    <ligand>
        <name>sn-glycerol 3-phosphate</name>
        <dbReference type="ChEBI" id="CHEBI:57597"/>
    </ligand>
</feature>
<feature type="binding site" evidence="1">
    <location>
        <position position="246"/>
    </location>
    <ligand>
        <name>glycerol</name>
        <dbReference type="ChEBI" id="CHEBI:17754"/>
    </ligand>
</feature>
<feature type="binding site" evidence="1">
    <location>
        <position position="246"/>
    </location>
    <ligand>
        <name>sn-glycerol 3-phosphate</name>
        <dbReference type="ChEBI" id="CHEBI:57597"/>
    </ligand>
</feature>
<feature type="binding site" evidence="1">
    <location>
        <position position="247"/>
    </location>
    <ligand>
        <name>glycerol</name>
        <dbReference type="ChEBI" id="CHEBI:17754"/>
    </ligand>
</feature>
<feature type="binding site" evidence="1">
    <location>
        <position position="268"/>
    </location>
    <ligand>
        <name>ADP</name>
        <dbReference type="ChEBI" id="CHEBI:456216"/>
    </ligand>
</feature>
<feature type="binding site" evidence="1">
    <location>
        <position position="268"/>
    </location>
    <ligand>
        <name>ATP</name>
        <dbReference type="ChEBI" id="CHEBI:30616"/>
    </ligand>
</feature>
<feature type="binding site" evidence="1">
    <location>
        <position position="313"/>
    </location>
    <ligand>
        <name>ADP</name>
        <dbReference type="ChEBI" id="CHEBI:456216"/>
    </ligand>
</feature>
<feature type="binding site" evidence="1">
    <location>
        <position position="313"/>
    </location>
    <ligand>
        <name>ATP</name>
        <dbReference type="ChEBI" id="CHEBI:30616"/>
    </ligand>
</feature>
<feature type="binding site" evidence="1">
    <location>
        <position position="317"/>
    </location>
    <ligand>
        <name>ATP</name>
        <dbReference type="ChEBI" id="CHEBI:30616"/>
    </ligand>
</feature>
<feature type="binding site" evidence="1">
    <location>
        <position position="414"/>
    </location>
    <ligand>
        <name>ADP</name>
        <dbReference type="ChEBI" id="CHEBI:456216"/>
    </ligand>
</feature>
<feature type="binding site" evidence="1">
    <location>
        <position position="414"/>
    </location>
    <ligand>
        <name>ATP</name>
        <dbReference type="ChEBI" id="CHEBI:30616"/>
    </ligand>
</feature>
<feature type="binding site" evidence="1">
    <location>
        <position position="418"/>
    </location>
    <ligand>
        <name>ADP</name>
        <dbReference type="ChEBI" id="CHEBI:456216"/>
    </ligand>
</feature>
<protein>
    <recommendedName>
        <fullName evidence="1">Glycerol kinase</fullName>
        <ecNumber evidence="1">2.7.1.30</ecNumber>
    </recommendedName>
    <alternativeName>
        <fullName evidence="1">ATP:glycerol 3-phosphotransferase</fullName>
    </alternativeName>
    <alternativeName>
        <fullName evidence="1">Glycerokinase</fullName>
        <shortName evidence="1">GK</shortName>
    </alternativeName>
</protein>
<reference key="1">
    <citation type="journal article" date="2006" name="Proc. Natl. Acad. Sci. U.S.A.">
        <title>Evolution of sensory complexity recorded in a myxobacterial genome.</title>
        <authorList>
            <person name="Goldman B.S."/>
            <person name="Nierman W.C."/>
            <person name="Kaiser D."/>
            <person name="Slater S.C."/>
            <person name="Durkin A.S."/>
            <person name="Eisen J.A."/>
            <person name="Ronning C.M."/>
            <person name="Barbazuk W.B."/>
            <person name="Blanchard M."/>
            <person name="Field C."/>
            <person name="Halling C."/>
            <person name="Hinkle G."/>
            <person name="Iartchuk O."/>
            <person name="Kim H.S."/>
            <person name="Mackenzie C."/>
            <person name="Madupu R."/>
            <person name="Miller N."/>
            <person name="Shvartsbeyn A."/>
            <person name="Sullivan S.A."/>
            <person name="Vaudin M."/>
            <person name="Wiegand R."/>
            <person name="Kaplan H.B."/>
        </authorList>
    </citation>
    <scope>NUCLEOTIDE SEQUENCE [LARGE SCALE GENOMIC DNA]</scope>
    <source>
        <strain>DK1622</strain>
    </source>
</reference>
<keyword id="KW-0067">ATP-binding</keyword>
<keyword id="KW-0319">Glycerol metabolism</keyword>
<keyword id="KW-0418">Kinase</keyword>
<keyword id="KW-0547">Nucleotide-binding</keyword>
<keyword id="KW-1185">Reference proteome</keyword>
<keyword id="KW-0808">Transferase</keyword>
<dbReference type="EC" id="2.7.1.30" evidence="1"/>
<dbReference type="EMBL" id="CP000113">
    <property type="protein sequence ID" value="ABF91454.1"/>
    <property type="molecule type" value="Genomic_DNA"/>
</dbReference>
<dbReference type="RefSeq" id="WP_011556696.1">
    <property type="nucleotide sequence ID" value="NC_008095.1"/>
</dbReference>
<dbReference type="SMR" id="Q1CXI5"/>
<dbReference type="STRING" id="246197.MXAN_6771"/>
<dbReference type="EnsemblBacteria" id="ABF91454">
    <property type="protein sequence ID" value="ABF91454"/>
    <property type="gene ID" value="MXAN_6771"/>
</dbReference>
<dbReference type="GeneID" id="41363962"/>
<dbReference type="KEGG" id="mxa:MXAN_6771"/>
<dbReference type="eggNOG" id="COG0554">
    <property type="taxonomic scope" value="Bacteria"/>
</dbReference>
<dbReference type="HOGENOM" id="CLU_009281_2_3_7"/>
<dbReference type="OrthoDB" id="9805576at2"/>
<dbReference type="UniPathway" id="UPA00618">
    <property type="reaction ID" value="UER00672"/>
</dbReference>
<dbReference type="Proteomes" id="UP000002402">
    <property type="component" value="Chromosome"/>
</dbReference>
<dbReference type="GO" id="GO:0005829">
    <property type="term" value="C:cytosol"/>
    <property type="evidence" value="ECO:0007669"/>
    <property type="project" value="TreeGrafter"/>
</dbReference>
<dbReference type="GO" id="GO:0005524">
    <property type="term" value="F:ATP binding"/>
    <property type="evidence" value="ECO:0007669"/>
    <property type="project" value="UniProtKB-UniRule"/>
</dbReference>
<dbReference type="GO" id="GO:0004370">
    <property type="term" value="F:glycerol kinase activity"/>
    <property type="evidence" value="ECO:0000250"/>
    <property type="project" value="UniProtKB"/>
</dbReference>
<dbReference type="GO" id="GO:0019563">
    <property type="term" value="P:glycerol catabolic process"/>
    <property type="evidence" value="ECO:0007669"/>
    <property type="project" value="UniProtKB-UniRule"/>
</dbReference>
<dbReference type="GO" id="GO:0006071">
    <property type="term" value="P:glycerol metabolic process"/>
    <property type="evidence" value="ECO:0000250"/>
    <property type="project" value="UniProtKB"/>
</dbReference>
<dbReference type="GO" id="GO:0006072">
    <property type="term" value="P:glycerol-3-phosphate metabolic process"/>
    <property type="evidence" value="ECO:0007669"/>
    <property type="project" value="InterPro"/>
</dbReference>
<dbReference type="CDD" id="cd07786">
    <property type="entry name" value="FGGY_EcGK_like"/>
    <property type="match status" value="1"/>
</dbReference>
<dbReference type="FunFam" id="3.30.420.40:FF:000007">
    <property type="entry name" value="Glycerol kinase"/>
    <property type="match status" value="1"/>
</dbReference>
<dbReference type="FunFam" id="3.30.420.40:FF:000008">
    <property type="entry name" value="Glycerol kinase"/>
    <property type="match status" value="1"/>
</dbReference>
<dbReference type="Gene3D" id="3.30.420.40">
    <property type="match status" value="2"/>
</dbReference>
<dbReference type="HAMAP" id="MF_00186">
    <property type="entry name" value="Glycerol_kin"/>
    <property type="match status" value="1"/>
</dbReference>
<dbReference type="InterPro" id="IPR043129">
    <property type="entry name" value="ATPase_NBD"/>
</dbReference>
<dbReference type="InterPro" id="IPR000577">
    <property type="entry name" value="Carb_kinase_FGGY"/>
</dbReference>
<dbReference type="InterPro" id="IPR018483">
    <property type="entry name" value="Carb_kinase_FGGY_CS"/>
</dbReference>
<dbReference type="InterPro" id="IPR018485">
    <property type="entry name" value="FGGY_C"/>
</dbReference>
<dbReference type="InterPro" id="IPR018484">
    <property type="entry name" value="FGGY_N"/>
</dbReference>
<dbReference type="InterPro" id="IPR005999">
    <property type="entry name" value="Glycerol_kin"/>
</dbReference>
<dbReference type="NCBIfam" id="TIGR01311">
    <property type="entry name" value="glycerol_kin"/>
    <property type="match status" value="1"/>
</dbReference>
<dbReference type="NCBIfam" id="NF000756">
    <property type="entry name" value="PRK00047.1"/>
    <property type="match status" value="1"/>
</dbReference>
<dbReference type="PANTHER" id="PTHR10196:SF69">
    <property type="entry name" value="GLYCEROL KINASE"/>
    <property type="match status" value="1"/>
</dbReference>
<dbReference type="PANTHER" id="PTHR10196">
    <property type="entry name" value="SUGAR KINASE"/>
    <property type="match status" value="1"/>
</dbReference>
<dbReference type="Pfam" id="PF02782">
    <property type="entry name" value="FGGY_C"/>
    <property type="match status" value="1"/>
</dbReference>
<dbReference type="Pfam" id="PF00370">
    <property type="entry name" value="FGGY_N"/>
    <property type="match status" value="1"/>
</dbReference>
<dbReference type="PIRSF" id="PIRSF000538">
    <property type="entry name" value="GlpK"/>
    <property type="match status" value="1"/>
</dbReference>
<dbReference type="SUPFAM" id="SSF53067">
    <property type="entry name" value="Actin-like ATPase domain"/>
    <property type="match status" value="2"/>
</dbReference>
<dbReference type="PROSITE" id="PS00933">
    <property type="entry name" value="FGGY_KINASES_1"/>
    <property type="match status" value="1"/>
</dbReference>
<dbReference type="PROSITE" id="PS00445">
    <property type="entry name" value="FGGY_KINASES_2"/>
    <property type="match status" value="1"/>
</dbReference>
<name>GLPK_MYXXD</name>
<sequence>MPKAKYVLALDQGTTGTHVSILDTKLQVVGRSYKEFTQHFPKPSWVEHDLDEIWASSEWCIARALKSAGLRGKDIAAIGITNQRETTGLWMRGSGQPLSHAIVWQDRRTAEQCRRLKEQGVEPRVREVTGLVVDPYFSGTKLTWMFDHLKGARAKAEKGDVCFGTIDTWLVYKLTGGAAHVTDVSNASRTLLMDLTTLQWSDEMRAMLSVPAACLPQIRGSAEVYGTTRGMRSLPDGIPVAGMAGDQQAALFGQACFEPGESKCTYGTGAFLLMNTGSEPVRSSAGLLTTVAWRLGGTGTTTYALEGSSFIAGAAVQWMRDGLKVIKRAPDIEALAASVKDSGDVVFVPALAGLGAPHWRPEARGLFAGIDRSTTVAHMARAVLEGIALQIHDLAEAMRRDSGRDIPVFKADGGAAANNLLMQFQADVLGVPLVRPRNLETTSLGAAFLGGLGAGIWDSPEAIRRAWKAEKTFKPKMKPDARERHLAKWKRAVERA</sequence>
<accession>Q1CXI5</accession>
<evidence type="ECO:0000255" key="1">
    <source>
        <dbReference type="HAMAP-Rule" id="MF_00186"/>
    </source>
</evidence>
<comment type="function">
    <text evidence="1">Key enzyme in the regulation of glycerol uptake and metabolism. Catalyzes the phosphorylation of glycerol to yield sn-glycerol 3-phosphate.</text>
</comment>
<comment type="catalytic activity">
    <reaction evidence="1">
        <text>glycerol + ATP = sn-glycerol 3-phosphate + ADP + H(+)</text>
        <dbReference type="Rhea" id="RHEA:21644"/>
        <dbReference type="ChEBI" id="CHEBI:15378"/>
        <dbReference type="ChEBI" id="CHEBI:17754"/>
        <dbReference type="ChEBI" id="CHEBI:30616"/>
        <dbReference type="ChEBI" id="CHEBI:57597"/>
        <dbReference type="ChEBI" id="CHEBI:456216"/>
        <dbReference type="EC" id="2.7.1.30"/>
    </reaction>
</comment>
<comment type="activity regulation">
    <text evidence="1">Inhibited by fructose 1,6-bisphosphate (FBP).</text>
</comment>
<comment type="pathway">
    <text evidence="1">Polyol metabolism; glycerol degradation via glycerol kinase pathway; sn-glycerol 3-phosphate from glycerol: step 1/1.</text>
</comment>
<comment type="similarity">
    <text evidence="1">Belongs to the FGGY kinase family.</text>
</comment>
<organism>
    <name type="scientific">Myxococcus xanthus (strain DK1622)</name>
    <dbReference type="NCBI Taxonomy" id="246197"/>
    <lineage>
        <taxon>Bacteria</taxon>
        <taxon>Pseudomonadati</taxon>
        <taxon>Myxococcota</taxon>
        <taxon>Myxococcia</taxon>
        <taxon>Myxococcales</taxon>
        <taxon>Cystobacterineae</taxon>
        <taxon>Myxococcaceae</taxon>
        <taxon>Myxococcus</taxon>
    </lineage>
</organism>
<gene>
    <name evidence="1" type="primary">glpK</name>
    <name type="ordered locus">MXAN_6771</name>
</gene>
<proteinExistence type="inferred from homology"/>